<name>FADB_SALG2</name>
<sequence length="729" mass="79612">MLYKGDTLYLDWLEDGIAELVFDAPGSVNKLDTATVASLGQALEVLEKQHDLKGLLLRSNKAAFIVGADITEFLSLFLVPEEQLSQWLHFANSVFNRLEDLPVPTLAAVNGYALGGGCECVLATDYRLATPDLRIGLPETKLGIMPGFGGSVRLPRMLGADSALEIIAAGKDVGAEHALKIGLVDGVVKQEKLIEGAIAVLRQAITGDLDWRAKRQPKLEPLKLSKIEAAMSFTIAKGMVAQTAGKHYPAPMTAVKTIEAAARFGREEALNLENKSFVPLAHTNEARALVGIFLNDQYVKGKAKKLTKDIETPKQAAVLGAGIMGGGIAYQSAWKGVPVIMKDINDKSLNLGMTEAAKLLNKQLERGKIDGLKLAGVISTIHPTLDYAGFDRVDVVVEAVVENPKVKKAVLAETEQKVRPETVLASNTSTIPIGELASALERPENFCGMHFFNPVHRMPLVEIIRGEKSSDETIAKVVAWASKMGKTPIVVNDCPGFFVNRVLFPYFAGFSQLLRDGADFRKVDKVMEKQFGWPMGPAYLLDVVGIDTAHHAQAVMAAGFPQRMQKEYRDAIDALFDASRFGQKNGLGFWRYKEDSKGKPKKEEDAAVDDLLASVSQTKRDFSDDEIIARMMIPMINEVVRCLEEGIIASPAEADMALVYGLGFPPFHGGAFRWLDTQGSAKYLDMAQQYQHLGPLYEVPEGLRNKARHNEPYYPPVEPARPVGSLKTA</sequence>
<protein>
    <recommendedName>
        <fullName evidence="1">Fatty acid oxidation complex subunit alpha</fullName>
    </recommendedName>
    <domain>
        <recommendedName>
            <fullName evidence="1">Enoyl-CoA hydratase/Delta(3)-cis-Delta(2)-trans-enoyl-CoA isomerase/3-hydroxybutyryl-CoA epimerase</fullName>
            <ecNumber evidence="1">4.2.1.17</ecNumber>
            <ecNumber evidence="1">5.1.2.3</ecNumber>
            <ecNumber evidence="1">5.3.3.8</ecNumber>
        </recommendedName>
    </domain>
    <domain>
        <recommendedName>
            <fullName evidence="1">3-hydroxyacyl-CoA dehydrogenase</fullName>
            <ecNumber evidence="1">1.1.1.35</ecNumber>
        </recommendedName>
    </domain>
</protein>
<evidence type="ECO:0000255" key="1">
    <source>
        <dbReference type="HAMAP-Rule" id="MF_01621"/>
    </source>
</evidence>
<evidence type="ECO:0000256" key="2">
    <source>
        <dbReference type="SAM" id="MobiDB-lite"/>
    </source>
</evidence>
<feature type="chain" id="PRO_1000186049" description="Fatty acid oxidation complex subunit alpha">
    <location>
        <begin position="1"/>
        <end position="729"/>
    </location>
</feature>
<feature type="region of interest" description="Enoyl-CoA hydratase/isomerase" evidence="1">
    <location>
        <begin position="1"/>
        <end position="189"/>
    </location>
</feature>
<feature type="region of interest" description="3-hydroxyacyl-CoA dehydrogenase" evidence="1">
    <location>
        <begin position="311"/>
        <end position="729"/>
    </location>
</feature>
<feature type="region of interest" description="Disordered" evidence="2">
    <location>
        <begin position="708"/>
        <end position="729"/>
    </location>
</feature>
<feature type="active site" description="For 3-hydroxyacyl-CoA dehydrogenase activity" evidence="1">
    <location>
        <position position="450"/>
    </location>
</feature>
<feature type="binding site" evidence="1">
    <location>
        <position position="296"/>
    </location>
    <ligand>
        <name>substrate</name>
    </ligand>
</feature>
<feature type="binding site" evidence="1">
    <location>
        <position position="324"/>
    </location>
    <ligand>
        <name>NAD(+)</name>
        <dbReference type="ChEBI" id="CHEBI:57540"/>
    </ligand>
</feature>
<feature type="binding site" evidence="1">
    <location>
        <position position="343"/>
    </location>
    <ligand>
        <name>NAD(+)</name>
        <dbReference type="ChEBI" id="CHEBI:57540"/>
    </ligand>
</feature>
<feature type="binding site" evidence="1">
    <location>
        <begin position="400"/>
        <end position="402"/>
    </location>
    <ligand>
        <name>NAD(+)</name>
        <dbReference type="ChEBI" id="CHEBI:57540"/>
    </ligand>
</feature>
<feature type="binding site" evidence="1">
    <location>
        <position position="407"/>
    </location>
    <ligand>
        <name>NAD(+)</name>
        <dbReference type="ChEBI" id="CHEBI:57540"/>
    </ligand>
</feature>
<feature type="binding site" evidence="1">
    <location>
        <position position="429"/>
    </location>
    <ligand>
        <name>NAD(+)</name>
        <dbReference type="ChEBI" id="CHEBI:57540"/>
    </ligand>
</feature>
<feature type="binding site" evidence="1">
    <location>
        <position position="453"/>
    </location>
    <ligand>
        <name>NAD(+)</name>
        <dbReference type="ChEBI" id="CHEBI:57540"/>
    </ligand>
</feature>
<feature type="binding site" evidence="1">
    <location>
        <position position="500"/>
    </location>
    <ligand>
        <name>substrate</name>
    </ligand>
</feature>
<feature type="binding site" evidence="1">
    <location>
        <position position="660"/>
    </location>
    <ligand>
        <name>substrate</name>
    </ligand>
</feature>
<feature type="site" description="Important for catalytic activity" evidence="1">
    <location>
        <position position="119"/>
    </location>
</feature>
<feature type="site" description="Important for catalytic activity" evidence="1">
    <location>
        <position position="139"/>
    </location>
</feature>
<comment type="function">
    <text evidence="1">Involved in the aerobic and anaerobic degradation of long-chain fatty acids via beta-oxidation cycle. Catalyzes the formation of 3-oxoacyl-CoA from enoyl-CoA via L-3-hydroxyacyl-CoA. It can also use D-3-hydroxyacyl-CoA and cis-3-enoyl-CoA as substrate.</text>
</comment>
<comment type="catalytic activity">
    <reaction evidence="1">
        <text>a (3S)-3-hydroxyacyl-CoA + NAD(+) = a 3-oxoacyl-CoA + NADH + H(+)</text>
        <dbReference type="Rhea" id="RHEA:22432"/>
        <dbReference type="ChEBI" id="CHEBI:15378"/>
        <dbReference type="ChEBI" id="CHEBI:57318"/>
        <dbReference type="ChEBI" id="CHEBI:57540"/>
        <dbReference type="ChEBI" id="CHEBI:57945"/>
        <dbReference type="ChEBI" id="CHEBI:90726"/>
        <dbReference type="EC" id="1.1.1.35"/>
    </reaction>
</comment>
<comment type="catalytic activity">
    <reaction evidence="1">
        <text>a (3S)-3-hydroxyacyl-CoA = a (2E)-enoyl-CoA + H2O</text>
        <dbReference type="Rhea" id="RHEA:16105"/>
        <dbReference type="ChEBI" id="CHEBI:15377"/>
        <dbReference type="ChEBI" id="CHEBI:57318"/>
        <dbReference type="ChEBI" id="CHEBI:58856"/>
        <dbReference type="EC" id="4.2.1.17"/>
    </reaction>
</comment>
<comment type="catalytic activity">
    <reaction evidence="1">
        <text>a 4-saturated-(3S)-3-hydroxyacyl-CoA = a (3E)-enoyl-CoA + H2O</text>
        <dbReference type="Rhea" id="RHEA:20724"/>
        <dbReference type="ChEBI" id="CHEBI:15377"/>
        <dbReference type="ChEBI" id="CHEBI:58521"/>
        <dbReference type="ChEBI" id="CHEBI:137480"/>
        <dbReference type="EC" id="4.2.1.17"/>
    </reaction>
</comment>
<comment type="catalytic activity">
    <reaction evidence="1">
        <text>(3S)-3-hydroxybutanoyl-CoA = (3R)-3-hydroxybutanoyl-CoA</text>
        <dbReference type="Rhea" id="RHEA:21760"/>
        <dbReference type="ChEBI" id="CHEBI:57315"/>
        <dbReference type="ChEBI" id="CHEBI:57316"/>
        <dbReference type="EC" id="5.1.2.3"/>
    </reaction>
</comment>
<comment type="catalytic activity">
    <reaction evidence="1">
        <text>a (3Z)-enoyl-CoA = a 4-saturated (2E)-enoyl-CoA</text>
        <dbReference type="Rhea" id="RHEA:45900"/>
        <dbReference type="ChEBI" id="CHEBI:85097"/>
        <dbReference type="ChEBI" id="CHEBI:85489"/>
        <dbReference type="EC" id="5.3.3.8"/>
    </reaction>
</comment>
<comment type="catalytic activity">
    <reaction evidence="1">
        <text>a (3E)-enoyl-CoA = a 4-saturated (2E)-enoyl-CoA</text>
        <dbReference type="Rhea" id="RHEA:45228"/>
        <dbReference type="ChEBI" id="CHEBI:58521"/>
        <dbReference type="ChEBI" id="CHEBI:85097"/>
        <dbReference type="EC" id="5.3.3.8"/>
    </reaction>
</comment>
<comment type="pathway">
    <text evidence="1">Lipid metabolism; fatty acid beta-oxidation.</text>
</comment>
<comment type="subunit">
    <text evidence="1">Heterotetramer of two alpha chains (FadB) and two beta chains (FadA).</text>
</comment>
<comment type="similarity">
    <text evidence="1">In the N-terminal section; belongs to the enoyl-CoA hydratase/isomerase family.</text>
</comment>
<comment type="similarity">
    <text evidence="1">In the C-terminal section; belongs to the 3-hydroxyacyl-CoA dehydrogenase family.</text>
</comment>
<accession>B5RFL6</accession>
<keyword id="KW-0276">Fatty acid metabolism</keyword>
<keyword id="KW-0413">Isomerase</keyword>
<keyword id="KW-0442">Lipid degradation</keyword>
<keyword id="KW-0443">Lipid metabolism</keyword>
<keyword id="KW-0456">Lyase</keyword>
<keyword id="KW-0511">Multifunctional enzyme</keyword>
<keyword id="KW-0520">NAD</keyword>
<keyword id="KW-0560">Oxidoreductase</keyword>
<gene>
    <name evidence="1" type="primary">fadB</name>
    <name type="ordered locus">SG3469</name>
</gene>
<proteinExistence type="inferred from homology"/>
<dbReference type="EC" id="4.2.1.17" evidence="1"/>
<dbReference type="EC" id="5.1.2.3" evidence="1"/>
<dbReference type="EC" id="5.3.3.8" evidence="1"/>
<dbReference type="EC" id="1.1.1.35" evidence="1"/>
<dbReference type="EMBL" id="AM933173">
    <property type="protein sequence ID" value="CAR39259.1"/>
    <property type="molecule type" value="Genomic_DNA"/>
</dbReference>
<dbReference type="RefSeq" id="WP_000966003.1">
    <property type="nucleotide sequence ID" value="NC_011274.1"/>
</dbReference>
<dbReference type="SMR" id="B5RFL6"/>
<dbReference type="KEGG" id="seg:SG3469"/>
<dbReference type="HOGENOM" id="CLU_009834_16_3_6"/>
<dbReference type="UniPathway" id="UPA00659"/>
<dbReference type="Proteomes" id="UP000008321">
    <property type="component" value="Chromosome"/>
</dbReference>
<dbReference type="GO" id="GO:0036125">
    <property type="term" value="C:fatty acid beta-oxidation multienzyme complex"/>
    <property type="evidence" value="ECO:0007669"/>
    <property type="project" value="InterPro"/>
</dbReference>
<dbReference type="GO" id="GO:0008692">
    <property type="term" value="F:3-hydroxybutyryl-CoA epimerase activity"/>
    <property type="evidence" value="ECO:0007669"/>
    <property type="project" value="UniProtKB-UniRule"/>
</dbReference>
<dbReference type="GO" id="GO:0004165">
    <property type="term" value="F:delta(3)-delta(2)-enoyl-CoA isomerase activity"/>
    <property type="evidence" value="ECO:0007669"/>
    <property type="project" value="UniProtKB-UniRule"/>
</dbReference>
<dbReference type="GO" id="GO:0004300">
    <property type="term" value="F:enoyl-CoA hydratase activity"/>
    <property type="evidence" value="ECO:0007669"/>
    <property type="project" value="UniProtKB-UniRule"/>
</dbReference>
<dbReference type="GO" id="GO:0016509">
    <property type="term" value="F:long-chain-3-hydroxyacyl-CoA dehydrogenase activity"/>
    <property type="evidence" value="ECO:0007669"/>
    <property type="project" value="TreeGrafter"/>
</dbReference>
<dbReference type="GO" id="GO:0070403">
    <property type="term" value="F:NAD+ binding"/>
    <property type="evidence" value="ECO:0007669"/>
    <property type="project" value="InterPro"/>
</dbReference>
<dbReference type="GO" id="GO:0006635">
    <property type="term" value="P:fatty acid beta-oxidation"/>
    <property type="evidence" value="ECO:0007669"/>
    <property type="project" value="UniProtKB-UniRule"/>
</dbReference>
<dbReference type="CDD" id="cd06558">
    <property type="entry name" value="crotonase-like"/>
    <property type="match status" value="1"/>
</dbReference>
<dbReference type="FunFam" id="1.10.1040.50:FF:000001">
    <property type="entry name" value="Fatty acid oxidation complex subunit alpha"/>
    <property type="match status" value="1"/>
</dbReference>
<dbReference type="FunFam" id="3.90.226.10:FF:000018">
    <property type="entry name" value="Fatty acid oxidation complex subunit alpha"/>
    <property type="match status" value="1"/>
</dbReference>
<dbReference type="FunFam" id="3.40.50.720:FF:000009">
    <property type="entry name" value="Fatty oxidation complex, alpha subunit"/>
    <property type="match status" value="1"/>
</dbReference>
<dbReference type="Gene3D" id="1.10.1040.50">
    <property type="match status" value="1"/>
</dbReference>
<dbReference type="Gene3D" id="3.90.226.10">
    <property type="entry name" value="2-enoyl-CoA Hydratase, Chain A, domain 1"/>
    <property type="match status" value="1"/>
</dbReference>
<dbReference type="Gene3D" id="3.40.50.720">
    <property type="entry name" value="NAD(P)-binding Rossmann-like Domain"/>
    <property type="match status" value="1"/>
</dbReference>
<dbReference type="HAMAP" id="MF_01621">
    <property type="entry name" value="FadB"/>
    <property type="match status" value="1"/>
</dbReference>
<dbReference type="InterPro" id="IPR006180">
    <property type="entry name" value="3-OHacyl-CoA_DH_CS"/>
</dbReference>
<dbReference type="InterPro" id="IPR006176">
    <property type="entry name" value="3-OHacyl-CoA_DH_NAD-bd"/>
</dbReference>
<dbReference type="InterPro" id="IPR006108">
    <property type="entry name" value="3HC_DH_C"/>
</dbReference>
<dbReference type="InterPro" id="IPR008927">
    <property type="entry name" value="6-PGluconate_DH-like_C_sf"/>
</dbReference>
<dbReference type="InterPro" id="IPR029045">
    <property type="entry name" value="ClpP/crotonase-like_dom_sf"/>
</dbReference>
<dbReference type="InterPro" id="IPR018376">
    <property type="entry name" value="Enoyl-CoA_hyd/isom_CS"/>
</dbReference>
<dbReference type="InterPro" id="IPR001753">
    <property type="entry name" value="Enoyl-CoA_hydra/iso"/>
</dbReference>
<dbReference type="InterPro" id="IPR050136">
    <property type="entry name" value="FA_oxidation_alpha_subunit"/>
</dbReference>
<dbReference type="InterPro" id="IPR012799">
    <property type="entry name" value="FadB"/>
</dbReference>
<dbReference type="InterPro" id="IPR036291">
    <property type="entry name" value="NAD(P)-bd_dom_sf"/>
</dbReference>
<dbReference type="NCBIfam" id="TIGR02437">
    <property type="entry name" value="FadB"/>
    <property type="match status" value="1"/>
</dbReference>
<dbReference type="NCBIfam" id="NF008727">
    <property type="entry name" value="PRK11730.1"/>
    <property type="match status" value="1"/>
</dbReference>
<dbReference type="PANTHER" id="PTHR43612">
    <property type="entry name" value="TRIFUNCTIONAL ENZYME SUBUNIT ALPHA"/>
    <property type="match status" value="1"/>
</dbReference>
<dbReference type="PANTHER" id="PTHR43612:SF3">
    <property type="entry name" value="TRIFUNCTIONAL ENZYME SUBUNIT ALPHA, MITOCHONDRIAL"/>
    <property type="match status" value="1"/>
</dbReference>
<dbReference type="Pfam" id="PF00725">
    <property type="entry name" value="3HCDH"/>
    <property type="match status" value="2"/>
</dbReference>
<dbReference type="Pfam" id="PF02737">
    <property type="entry name" value="3HCDH_N"/>
    <property type="match status" value="1"/>
</dbReference>
<dbReference type="Pfam" id="PF00378">
    <property type="entry name" value="ECH_1"/>
    <property type="match status" value="1"/>
</dbReference>
<dbReference type="SUPFAM" id="SSF48179">
    <property type="entry name" value="6-phosphogluconate dehydrogenase C-terminal domain-like"/>
    <property type="match status" value="2"/>
</dbReference>
<dbReference type="SUPFAM" id="SSF52096">
    <property type="entry name" value="ClpP/crotonase"/>
    <property type="match status" value="1"/>
</dbReference>
<dbReference type="SUPFAM" id="SSF51735">
    <property type="entry name" value="NAD(P)-binding Rossmann-fold domains"/>
    <property type="match status" value="1"/>
</dbReference>
<dbReference type="PROSITE" id="PS00067">
    <property type="entry name" value="3HCDH"/>
    <property type="match status" value="1"/>
</dbReference>
<dbReference type="PROSITE" id="PS00166">
    <property type="entry name" value="ENOYL_COA_HYDRATASE"/>
    <property type="match status" value="1"/>
</dbReference>
<reference key="1">
    <citation type="journal article" date="2008" name="Genome Res.">
        <title>Comparative genome analysis of Salmonella enteritidis PT4 and Salmonella gallinarum 287/91 provides insights into evolutionary and host adaptation pathways.</title>
        <authorList>
            <person name="Thomson N.R."/>
            <person name="Clayton D.J."/>
            <person name="Windhorst D."/>
            <person name="Vernikos G."/>
            <person name="Davidson S."/>
            <person name="Churcher C."/>
            <person name="Quail M.A."/>
            <person name="Stevens M."/>
            <person name="Jones M.A."/>
            <person name="Watson M."/>
            <person name="Barron A."/>
            <person name="Layton A."/>
            <person name="Pickard D."/>
            <person name="Kingsley R.A."/>
            <person name="Bignell A."/>
            <person name="Clark L."/>
            <person name="Harris B."/>
            <person name="Ormond D."/>
            <person name="Abdellah Z."/>
            <person name="Brooks K."/>
            <person name="Cherevach I."/>
            <person name="Chillingworth T."/>
            <person name="Woodward J."/>
            <person name="Norberczak H."/>
            <person name="Lord A."/>
            <person name="Arrowsmith C."/>
            <person name="Jagels K."/>
            <person name="Moule S."/>
            <person name="Mungall K."/>
            <person name="Saunders M."/>
            <person name="Whitehead S."/>
            <person name="Chabalgoity J.A."/>
            <person name="Maskell D."/>
            <person name="Humphreys T."/>
            <person name="Roberts M."/>
            <person name="Barrow P.A."/>
            <person name="Dougan G."/>
            <person name="Parkhill J."/>
        </authorList>
    </citation>
    <scope>NUCLEOTIDE SEQUENCE [LARGE SCALE GENOMIC DNA]</scope>
    <source>
        <strain>287/91 / NCTC 13346</strain>
    </source>
</reference>
<organism>
    <name type="scientific">Salmonella gallinarum (strain 287/91 / NCTC 13346)</name>
    <dbReference type="NCBI Taxonomy" id="550538"/>
    <lineage>
        <taxon>Bacteria</taxon>
        <taxon>Pseudomonadati</taxon>
        <taxon>Pseudomonadota</taxon>
        <taxon>Gammaproteobacteria</taxon>
        <taxon>Enterobacterales</taxon>
        <taxon>Enterobacteriaceae</taxon>
        <taxon>Salmonella</taxon>
    </lineage>
</organism>